<keyword id="KW-0963">Cytoplasm</keyword>
<keyword id="KW-0227">DNA damage</keyword>
<keyword id="KW-0234">DNA repair</keyword>
<keyword id="KW-0235">DNA replication</keyword>
<keyword id="KW-0238">DNA-binding</keyword>
<keyword id="KW-0239">DNA-directed DNA polymerase</keyword>
<keyword id="KW-0460">Magnesium</keyword>
<keyword id="KW-0479">Metal-binding</keyword>
<keyword id="KW-0515">Mutator protein</keyword>
<keyword id="KW-0548">Nucleotidyltransferase</keyword>
<keyword id="KW-1185">Reference proteome</keyword>
<keyword id="KW-0808">Transferase</keyword>
<dbReference type="EC" id="2.7.7.7"/>
<dbReference type="EMBL" id="AE000516">
    <property type="protein sequence ID" value="AAK47474.1"/>
    <property type="molecule type" value="Genomic_DNA"/>
</dbReference>
<dbReference type="PIR" id="A70649">
    <property type="entry name" value="A70649"/>
</dbReference>
<dbReference type="RefSeq" id="WP_003899898.1">
    <property type="nucleotide sequence ID" value="NZ_KK341227.1"/>
</dbReference>
<dbReference type="SMR" id="P9WNT0"/>
<dbReference type="KEGG" id="mtc:MT3142"/>
<dbReference type="PATRIC" id="fig|83331.31.peg.3385"/>
<dbReference type="HOGENOM" id="CLU_012348_1_0_11"/>
<dbReference type="Proteomes" id="UP000001020">
    <property type="component" value="Chromosome"/>
</dbReference>
<dbReference type="GO" id="GO:0005829">
    <property type="term" value="C:cytosol"/>
    <property type="evidence" value="ECO:0007669"/>
    <property type="project" value="TreeGrafter"/>
</dbReference>
<dbReference type="GO" id="GO:0003684">
    <property type="term" value="F:damaged DNA binding"/>
    <property type="evidence" value="ECO:0007669"/>
    <property type="project" value="InterPro"/>
</dbReference>
<dbReference type="GO" id="GO:0003887">
    <property type="term" value="F:DNA-directed DNA polymerase activity"/>
    <property type="evidence" value="ECO:0007669"/>
    <property type="project" value="UniProtKB-UniRule"/>
</dbReference>
<dbReference type="GO" id="GO:0000287">
    <property type="term" value="F:magnesium ion binding"/>
    <property type="evidence" value="ECO:0007669"/>
    <property type="project" value="UniProtKB-UniRule"/>
</dbReference>
<dbReference type="GO" id="GO:0006261">
    <property type="term" value="P:DNA-templated DNA replication"/>
    <property type="evidence" value="ECO:0007669"/>
    <property type="project" value="UniProtKB-UniRule"/>
</dbReference>
<dbReference type="GO" id="GO:0042276">
    <property type="term" value="P:error-prone translesion synthesis"/>
    <property type="evidence" value="ECO:0007669"/>
    <property type="project" value="TreeGrafter"/>
</dbReference>
<dbReference type="GO" id="GO:0009432">
    <property type="term" value="P:SOS response"/>
    <property type="evidence" value="ECO:0007669"/>
    <property type="project" value="TreeGrafter"/>
</dbReference>
<dbReference type="CDD" id="cd03586">
    <property type="entry name" value="PolY_Pol_IV_kappa"/>
    <property type="match status" value="1"/>
</dbReference>
<dbReference type="FunFam" id="3.30.1490.100:FF:000018">
    <property type="entry name" value="DNA polymerase IV"/>
    <property type="match status" value="1"/>
</dbReference>
<dbReference type="Gene3D" id="3.30.70.270">
    <property type="match status" value="1"/>
</dbReference>
<dbReference type="Gene3D" id="3.40.1170.60">
    <property type="match status" value="1"/>
</dbReference>
<dbReference type="Gene3D" id="1.10.150.20">
    <property type="entry name" value="5' to 3' exonuclease, C-terminal subdomain"/>
    <property type="match status" value="1"/>
</dbReference>
<dbReference type="Gene3D" id="3.30.1490.100">
    <property type="entry name" value="DNA polymerase, Y-family, little finger domain"/>
    <property type="match status" value="1"/>
</dbReference>
<dbReference type="HAMAP" id="MF_01113">
    <property type="entry name" value="DNApol_IV"/>
    <property type="match status" value="1"/>
</dbReference>
<dbReference type="InterPro" id="IPR043502">
    <property type="entry name" value="DNA/RNA_pol_sf"/>
</dbReference>
<dbReference type="InterPro" id="IPR036775">
    <property type="entry name" value="DNA_pol_Y-fam_lit_finger_sf"/>
</dbReference>
<dbReference type="InterPro" id="IPR017961">
    <property type="entry name" value="DNA_pol_Y-fam_little_finger"/>
</dbReference>
<dbReference type="InterPro" id="IPR050116">
    <property type="entry name" value="DNA_polymerase-Y"/>
</dbReference>
<dbReference type="InterPro" id="IPR022880">
    <property type="entry name" value="DNApol_IV"/>
</dbReference>
<dbReference type="InterPro" id="IPR043128">
    <property type="entry name" value="Rev_trsase/Diguanyl_cyclase"/>
</dbReference>
<dbReference type="InterPro" id="IPR001126">
    <property type="entry name" value="UmuC"/>
</dbReference>
<dbReference type="NCBIfam" id="NF002883">
    <property type="entry name" value="PRK03352.1"/>
    <property type="match status" value="1"/>
</dbReference>
<dbReference type="PANTHER" id="PTHR11076:SF33">
    <property type="entry name" value="DNA POLYMERASE KAPPA"/>
    <property type="match status" value="1"/>
</dbReference>
<dbReference type="PANTHER" id="PTHR11076">
    <property type="entry name" value="DNA REPAIR POLYMERASE UMUC / TRANSFERASE FAMILY MEMBER"/>
    <property type="match status" value="1"/>
</dbReference>
<dbReference type="Pfam" id="PF00817">
    <property type="entry name" value="IMS"/>
    <property type="match status" value="1"/>
</dbReference>
<dbReference type="Pfam" id="PF11799">
    <property type="entry name" value="IMS_C"/>
    <property type="match status" value="1"/>
</dbReference>
<dbReference type="SUPFAM" id="SSF56672">
    <property type="entry name" value="DNA/RNA polymerases"/>
    <property type="match status" value="1"/>
</dbReference>
<dbReference type="SUPFAM" id="SSF100879">
    <property type="entry name" value="Lesion bypass DNA polymerase (Y-family), little finger domain"/>
    <property type="match status" value="1"/>
</dbReference>
<dbReference type="PROSITE" id="PS50173">
    <property type="entry name" value="UMUC"/>
    <property type="match status" value="1"/>
</dbReference>
<accession>P9WNT0</accession>
<accession>L0TD22</accession>
<accession>P63987</accession>
<accession>P95102</accession>
<feature type="chain" id="PRO_0000427073" description="DNA polymerase IV 2">
    <location>
        <begin position="1"/>
        <end position="346"/>
    </location>
</feature>
<feature type="domain" description="UmuC">
    <location>
        <begin position="9"/>
        <end position="191"/>
    </location>
</feature>
<feature type="active site" evidence="1">
    <location>
        <position position="112"/>
    </location>
</feature>
<feature type="binding site" evidence="1">
    <location>
        <position position="13"/>
    </location>
    <ligand>
        <name>Mg(2+)</name>
        <dbReference type="ChEBI" id="CHEBI:18420"/>
    </ligand>
</feature>
<feature type="binding site" evidence="1">
    <location>
        <position position="111"/>
    </location>
    <ligand>
        <name>Mg(2+)</name>
        <dbReference type="ChEBI" id="CHEBI:18420"/>
    </ligand>
</feature>
<feature type="site" description="Substrate discrimination" evidence="1">
    <location>
        <position position="18"/>
    </location>
</feature>
<gene>
    <name type="primary">dinB2</name>
    <name type="synonym">dinP</name>
    <name type="ordered locus">MT3142</name>
</gene>
<evidence type="ECO:0000250" key="1"/>
<evidence type="ECO:0000305" key="2"/>
<reference key="1">
    <citation type="journal article" date="2002" name="J. Bacteriol.">
        <title>Whole-genome comparison of Mycobacterium tuberculosis clinical and laboratory strains.</title>
        <authorList>
            <person name="Fleischmann R.D."/>
            <person name="Alland D."/>
            <person name="Eisen J.A."/>
            <person name="Carpenter L."/>
            <person name="White O."/>
            <person name="Peterson J.D."/>
            <person name="DeBoy R.T."/>
            <person name="Dodson R.J."/>
            <person name="Gwinn M.L."/>
            <person name="Haft D.H."/>
            <person name="Hickey E.K."/>
            <person name="Kolonay J.F."/>
            <person name="Nelson W.C."/>
            <person name="Umayam L.A."/>
            <person name="Ermolaeva M.D."/>
            <person name="Salzberg S.L."/>
            <person name="Delcher A."/>
            <person name="Utterback T.R."/>
            <person name="Weidman J.F."/>
            <person name="Khouri H.M."/>
            <person name="Gill J."/>
            <person name="Mikula A."/>
            <person name="Bishai W."/>
            <person name="Jacobs W.R. Jr."/>
            <person name="Venter J.C."/>
            <person name="Fraser C.M."/>
        </authorList>
    </citation>
    <scope>NUCLEOTIDE SEQUENCE [LARGE SCALE GENOMIC DNA]</scope>
    <source>
        <strain>CDC 1551 / Oshkosh</strain>
    </source>
</reference>
<comment type="function">
    <text evidence="1">Poorly processive, error-prone DNA polymerase involved in untargeted mutagenesis. Copies undamaged DNA at stalled replication forks, which arise in vivo from mismatched or misaligned primer ends. These misaligned primers can be extended by PolIV. Exhibits no 3'-5' exonuclease (proofreading) activity. May be involved in translesional synthesis, in conjunction with the beta clamp from PolIII (By similarity).</text>
</comment>
<comment type="catalytic activity">
    <reaction>
        <text>DNA(n) + a 2'-deoxyribonucleoside 5'-triphosphate = DNA(n+1) + diphosphate</text>
        <dbReference type="Rhea" id="RHEA:22508"/>
        <dbReference type="Rhea" id="RHEA-COMP:17339"/>
        <dbReference type="Rhea" id="RHEA-COMP:17340"/>
        <dbReference type="ChEBI" id="CHEBI:33019"/>
        <dbReference type="ChEBI" id="CHEBI:61560"/>
        <dbReference type="ChEBI" id="CHEBI:173112"/>
        <dbReference type="EC" id="2.7.7.7"/>
    </reaction>
</comment>
<comment type="cofactor">
    <cofactor evidence="1">
        <name>Mg(2+)</name>
        <dbReference type="ChEBI" id="CHEBI:18420"/>
    </cofactor>
    <text evidence="1">Binds 2 magnesium ions per subunit.</text>
</comment>
<comment type="subunit">
    <text evidence="1">Monomer.</text>
</comment>
<comment type="subcellular location">
    <subcellularLocation>
        <location evidence="1">Cytoplasm</location>
    </subcellularLocation>
</comment>
<comment type="similarity">
    <text evidence="2">Belongs to the DNA polymerase type-Y family.</text>
</comment>
<name>DPO42_MYCTO</name>
<protein>
    <recommendedName>
        <fullName>DNA polymerase IV 2</fullName>
        <shortName>Pol IV 2</shortName>
        <ecNumber>2.7.7.7</ecNumber>
    </recommendedName>
</protein>
<proteinExistence type="inferred from homology"/>
<organism>
    <name type="scientific">Mycobacterium tuberculosis (strain CDC 1551 / Oshkosh)</name>
    <dbReference type="NCBI Taxonomy" id="83331"/>
    <lineage>
        <taxon>Bacteria</taxon>
        <taxon>Bacillati</taxon>
        <taxon>Actinomycetota</taxon>
        <taxon>Actinomycetes</taxon>
        <taxon>Mycobacteriales</taxon>
        <taxon>Mycobacteriaceae</taxon>
        <taxon>Mycobacterium</taxon>
        <taxon>Mycobacterium tuberculosis complex</taxon>
    </lineage>
</organism>
<sequence length="346" mass="37562">MPTAAPRWILHVDLDQFLASVELLRHPELAGLPVIVGGNGDPTEPRKVVTCASYEARAYGVRAGMPLRTAARRCPEATFLPSNPAAYNAASEEVVALLRDLGYPVEVWGWDEAYLAVAPGTPDDPIEVAEEIRKVILSQTGLSCSIGISDNKQRAKIATGLAKPAGIYQLTDANWMAIMGDRTVEALWGVGPKTTKRLAKLGINTVYQLAHTDSGLLMSTFGPRTALWLLLAKGGGDTEVSAQAWVPRSRSHAVTFPRDLTCRSEMESAVTELAQRTLNEVVASSRTVTRVAVTVRTATFYTRTKIRKLQAPSTDPDVITAAARHVLDLFELDRPVRLLGVRLELA</sequence>